<accession>Q2M2S9</accession>
<organism>
    <name type="scientific">Bos taurus</name>
    <name type="common">Bovine</name>
    <dbReference type="NCBI Taxonomy" id="9913"/>
    <lineage>
        <taxon>Eukaryota</taxon>
        <taxon>Metazoa</taxon>
        <taxon>Chordata</taxon>
        <taxon>Craniata</taxon>
        <taxon>Vertebrata</taxon>
        <taxon>Euteleostomi</taxon>
        <taxon>Mammalia</taxon>
        <taxon>Eutheria</taxon>
        <taxon>Laurasiatheria</taxon>
        <taxon>Artiodactyla</taxon>
        <taxon>Ruminantia</taxon>
        <taxon>Pecora</taxon>
        <taxon>Bovidae</taxon>
        <taxon>Bovinae</taxon>
        <taxon>Bos</taxon>
    </lineage>
</organism>
<protein>
    <recommendedName>
        <fullName>Complex III assembly factor LYRM7</fullName>
    </recommendedName>
    <alternativeName>
        <fullName>LYR motif-containing protein 7</fullName>
    </alternativeName>
</protein>
<dbReference type="EMBL" id="BC111663">
    <property type="protein sequence ID" value="AAI11664.1"/>
    <property type="molecule type" value="mRNA"/>
</dbReference>
<dbReference type="RefSeq" id="NP_001069973.1">
    <property type="nucleotide sequence ID" value="NM_001076505.2"/>
</dbReference>
<dbReference type="SMR" id="Q2M2S9"/>
<dbReference type="FunCoup" id="Q2M2S9">
    <property type="interactions" value="369"/>
</dbReference>
<dbReference type="STRING" id="9913.ENSBTAP00000041678"/>
<dbReference type="PaxDb" id="9913-ENSBTAP00000041678"/>
<dbReference type="GeneID" id="618451"/>
<dbReference type="KEGG" id="bta:618451"/>
<dbReference type="CTD" id="90624"/>
<dbReference type="eggNOG" id="ENOG502S5FU">
    <property type="taxonomic scope" value="Eukaryota"/>
</dbReference>
<dbReference type="InParanoid" id="Q2M2S9"/>
<dbReference type="OrthoDB" id="529194at2759"/>
<dbReference type="Proteomes" id="UP000009136">
    <property type="component" value="Unplaced"/>
</dbReference>
<dbReference type="GO" id="GO:0005759">
    <property type="term" value="C:mitochondrial matrix"/>
    <property type="evidence" value="ECO:0000318"/>
    <property type="project" value="GO_Central"/>
</dbReference>
<dbReference type="GO" id="GO:0044183">
    <property type="term" value="F:protein folding chaperone"/>
    <property type="evidence" value="ECO:0000318"/>
    <property type="project" value="GO_Central"/>
</dbReference>
<dbReference type="GO" id="GO:0034551">
    <property type="term" value="P:mitochondrial respiratory chain complex III assembly"/>
    <property type="evidence" value="ECO:0000318"/>
    <property type="project" value="GO_Central"/>
</dbReference>
<dbReference type="CDD" id="cd20267">
    <property type="entry name" value="Complex1_LYR_LYRM7"/>
    <property type="match status" value="1"/>
</dbReference>
<dbReference type="InterPro" id="IPR008011">
    <property type="entry name" value="Complex1_LYR_dom"/>
</dbReference>
<dbReference type="InterPro" id="IPR045298">
    <property type="entry name" value="Complex1_LYR_LYRM7"/>
</dbReference>
<dbReference type="InterPro" id="IPR050435">
    <property type="entry name" value="MZM1/LYRM7"/>
</dbReference>
<dbReference type="PANTHER" id="PTHR46749">
    <property type="entry name" value="COMPLEX III ASSEMBLY FACTOR LYRM7"/>
    <property type="match status" value="1"/>
</dbReference>
<dbReference type="PANTHER" id="PTHR46749:SF1">
    <property type="entry name" value="COMPLEX III ASSEMBLY FACTOR LYRM7"/>
    <property type="match status" value="1"/>
</dbReference>
<dbReference type="Pfam" id="PF05347">
    <property type="entry name" value="Complex1_LYR"/>
    <property type="match status" value="1"/>
</dbReference>
<gene>
    <name type="primary">LYRM7</name>
    <name type="synonym">MZM1L</name>
</gene>
<name>LYRM7_BOVIN</name>
<feature type="chain" id="PRO_0000251178" description="Complex III assembly factor LYRM7">
    <location>
        <begin position="1"/>
        <end position="104"/>
    </location>
</feature>
<feature type="modified residue" description="Phosphoserine" evidence="2">
    <location>
        <position position="60"/>
    </location>
</feature>
<evidence type="ECO:0000250" key="1"/>
<evidence type="ECO:0000250" key="2">
    <source>
        <dbReference type="UniProtKB" id="Q5U5X0"/>
    </source>
</evidence>
<evidence type="ECO:0000305" key="3"/>
<comment type="function">
    <text evidence="1">Assembly factor required for Rieske Fe-S protein UQCRFS1 incorporation into the cytochrome b-c1 (CIII) complex. Functions as a chaperone, binding to this subunit within the mitochondrial matrix and stabilizing it prior to its translocation and insertion into the late CIII dimeric intermediate within the mitochondrial inner membrane (By similarity).</text>
</comment>
<comment type="subunit">
    <text evidence="1">Interacts with UQCRFS1.</text>
</comment>
<comment type="subcellular location">
    <subcellularLocation>
        <location evidence="1">Mitochondrion matrix</location>
    </subcellularLocation>
</comment>
<comment type="similarity">
    <text evidence="3">Belongs to the complex I LYR family.</text>
</comment>
<keyword id="KW-0143">Chaperone</keyword>
<keyword id="KW-0496">Mitochondrion</keyword>
<keyword id="KW-0597">Phosphoprotein</keyword>
<keyword id="KW-1185">Reference proteome</keyword>
<sequence length="104" mass="11923">MGQAAKVLQLFKTLHRTRQQVFKNDARALEAARKKINEEFKCNKTETSPKKIEELIKIGSDVELILRTSVIQGIHTDHNTLKLVPRKDLLIENVPYCDAPTQKQ</sequence>
<proteinExistence type="inferred from homology"/>
<reference key="1">
    <citation type="submission" date="2006-01" db="EMBL/GenBank/DDBJ databases">
        <authorList>
            <consortium name="NIH - Mammalian Gene Collection (MGC) project"/>
        </authorList>
    </citation>
    <scope>NUCLEOTIDE SEQUENCE [LARGE SCALE MRNA]</scope>
    <source>
        <strain>Hereford</strain>
        <tissue>Testis</tissue>
    </source>
</reference>